<name>GCSPB_STAAM</name>
<gene>
    <name evidence="1" type="primary">gcvPB</name>
    <name type="ordered locus">SAV1535</name>
</gene>
<reference key="1">
    <citation type="journal article" date="2001" name="Lancet">
        <title>Whole genome sequencing of meticillin-resistant Staphylococcus aureus.</title>
        <authorList>
            <person name="Kuroda M."/>
            <person name="Ohta T."/>
            <person name="Uchiyama I."/>
            <person name="Baba T."/>
            <person name="Yuzawa H."/>
            <person name="Kobayashi I."/>
            <person name="Cui L."/>
            <person name="Oguchi A."/>
            <person name="Aoki K."/>
            <person name="Nagai Y."/>
            <person name="Lian J.-Q."/>
            <person name="Ito T."/>
            <person name="Kanamori M."/>
            <person name="Matsumaru H."/>
            <person name="Maruyama A."/>
            <person name="Murakami H."/>
            <person name="Hosoyama A."/>
            <person name="Mizutani-Ui Y."/>
            <person name="Takahashi N.K."/>
            <person name="Sawano T."/>
            <person name="Inoue R."/>
            <person name="Kaito C."/>
            <person name="Sekimizu K."/>
            <person name="Hirakawa H."/>
            <person name="Kuhara S."/>
            <person name="Goto S."/>
            <person name="Yabuzaki J."/>
            <person name="Kanehisa M."/>
            <person name="Yamashita A."/>
            <person name="Oshima K."/>
            <person name="Furuya K."/>
            <person name="Yoshino C."/>
            <person name="Shiba T."/>
            <person name="Hattori M."/>
            <person name="Ogasawara N."/>
            <person name="Hayashi H."/>
            <person name="Hiramatsu K."/>
        </authorList>
    </citation>
    <scope>NUCLEOTIDE SEQUENCE [LARGE SCALE GENOMIC DNA]</scope>
    <source>
        <strain>Mu50 / ATCC 700699</strain>
    </source>
</reference>
<comment type="function">
    <text evidence="1">The glycine cleavage system catalyzes the degradation of glycine. The P protein binds the alpha-amino group of glycine through its pyridoxal phosphate cofactor; CO(2) is released and the remaining methylamine moiety is then transferred to the lipoamide cofactor of the H protein.</text>
</comment>
<comment type="catalytic activity">
    <reaction evidence="1">
        <text>N(6)-[(R)-lipoyl]-L-lysyl-[glycine-cleavage complex H protein] + glycine + H(+) = N(6)-[(R)-S(8)-aminomethyldihydrolipoyl]-L-lysyl-[glycine-cleavage complex H protein] + CO2</text>
        <dbReference type="Rhea" id="RHEA:24304"/>
        <dbReference type="Rhea" id="RHEA-COMP:10494"/>
        <dbReference type="Rhea" id="RHEA-COMP:10495"/>
        <dbReference type="ChEBI" id="CHEBI:15378"/>
        <dbReference type="ChEBI" id="CHEBI:16526"/>
        <dbReference type="ChEBI" id="CHEBI:57305"/>
        <dbReference type="ChEBI" id="CHEBI:83099"/>
        <dbReference type="ChEBI" id="CHEBI:83143"/>
        <dbReference type="EC" id="1.4.4.2"/>
    </reaction>
</comment>
<comment type="cofactor">
    <cofactor evidence="1">
        <name>pyridoxal 5'-phosphate</name>
        <dbReference type="ChEBI" id="CHEBI:597326"/>
    </cofactor>
</comment>
<comment type="subunit">
    <text evidence="1">The glycine cleavage system is composed of four proteins: P, T, L and H. In this organism, the P 'protein' is a heterodimer of two subunits.</text>
</comment>
<comment type="similarity">
    <text evidence="1">Belongs to the GcvP family. C-terminal subunit subfamily.</text>
</comment>
<feature type="chain" id="PRO_0000167012" description="Probable glycine dehydrogenase (decarboxylating) subunit 2">
    <location>
        <begin position="1"/>
        <end position="490"/>
    </location>
</feature>
<feature type="modified residue" description="N6-(pyridoxal phosphate)lysine" evidence="1">
    <location>
        <position position="273"/>
    </location>
</feature>
<sequence length="490" mass="54783">MTSKSSPLIFERSREGRYAYSLPKSDIKTNSVESLLDDKFIRKNKAEFPEVAELDLVRHYTELSNKNFGVDNGFYPLGSCTMKYNPKINEKVARIPGFSESHPLQDEDQVQGSLEIIYSLQEELKEITGMDEVTLQPAAGAHGEWTALMIFKAYHENNGEGHRDEVIVPDSAHGTNPASASFAGFKSVTVKSNERGEVDIDDLKRVVNENTAAIMLTNPNTLGIFEKNIMEIREIVHNAGGLLYYDGANLNAIMDKVRPGDMGFDAVHLNLHKTFTGPHGGGGPGSGPVGVVKELASYLPKPMVIKDGDKFKYDNDIKNSIGRVKPFYGNFGIYLRAYTYIRTMGATGLKEVSEAAVLNANYIKARLSEHFEIPYKQYCKHEFVLSGVRQKEFGVRTLDMAKRLLDFGVHPPTIYFPLNVEEGMMIEPTETESKETLDYFIDTLISIAEEAKNDPDKVLEAPHTTVIDRLDEATAARKPILKFENLKQEK</sequence>
<organism>
    <name type="scientific">Staphylococcus aureus (strain Mu50 / ATCC 700699)</name>
    <dbReference type="NCBI Taxonomy" id="158878"/>
    <lineage>
        <taxon>Bacteria</taxon>
        <taxon>Bacillati</taxon>
        <taxon>Bacillota</taxon>
        <taxon>Bacilli</taxon>
        <taxon>Bacillales</taxon>
        <taxon>Staphylococcaceae</taxon>
        <taxon>Staphylococcus</taxon>
    </lineage>
</organism>
<evidence type="ECO:0000255" key="1">
    <source>
        <dbReference type="HAMAP-Rule" id="MF_00713"/>
    </source>
</evidence>
<protein>
    <recommendedName>
        <fullName evidence="1">Probable glycine dehydrogenase (decarboxylating) subunit 2</fullName>
        <ecNumber evidence="1">1.4.4.2</ecNumber>
    </recommendedName>
    <alternativeName>
        <fullName evidence="1">Glycine cleavage system P-protein subunit 2</fullName>
    </alternativeName>
    <alternativeName>
        <fullName evidence="1">Glycine decarboxylase subunit 2</fullName>
    </alternativeName>
    <alternativeName>
        <fullName evidence="1">Glycine dehydrogenase (aminomethyl-transferring) subunit 2</fullName>
    </alternativeName>
</protein>
<proteinExistence type="inferred from homology"/>
<keyword id="KW-0560">Oxidoreductase</keyword>
<keyword id="KW-0663">Pyridoxal phosphate</keyword>
<dbReference type="EC" id="1.4.4.2" evidence="1"/>
<dbReference type="EMBL" id="BA000017">
    <property type="protein sequence ID" value="BAB57697.1"/>
    <property type="molecule type" value="Genomic_DNA"/>
</dbReference>
<dbReference type="RefSeq" id="WP_000202188.1">
    <property type="nucleotide sequence ID" value="NC_002758.2"/>
</dbReference>
<dbReference type="SMR" id="P64219"/>
<dbReference type="KEGG" id="sav:SAV1535"/>
<dbReference type="HOGENOM" id="CLU_004620_5_0_9"/>
<dbReference type="PhylomeDB" id="P64219"/>
<dbReference type="Proteomes" id="UP000002481">
    <property type="component" value="Chromosome"/>
</dbReference>
<dbReference type="GO" id="GO:0005829">
    <property type="term" value="C:cytosol"/>
    <property type="evidence" value="ECO:0007669"/>
    <property type="project" value="TreeGrafter"/>
</dbReference>
<dbReference type="GO" id="GO:0005960">
    <property type="term" value="C:glycine cleavage complex"/>
    <property type="evidence" value="ECO:0007669"/>
    <property type="project" value="TreeGrafter"/>
</dbReference>
<dbReference type="GO" id="GO:0016594">
    <property type="term" value="F:glycine binding"/>
    <property type="evidence" value="ECO:0007669"/>
    <property type="project" value="TreeGrafter"/>
</dbReference>
<dbReference type="GO" id="GO:0004375">
    <property type="term" value="F:glycine dehydrogenase (decarboxylating) activity"/>
    <property type="evidence" value="ECO:0007669"/>
    <property type="project" value="UniProtKB-EC"/>
</dbReference>
<dbReference type="GO" id="GO:0030170">
    <property type="term" value="F:pyridoxal phosphate binding"/>
    <property type="evidence" value="ECO:0007669"/>
    <property type="project" value="TreeGrafter"/>
</dbReference>
<dbReference type="GO" id="GO:0019464">
    <property type="term" value="P:glycine decarboxylation via glycine cleavage system"/>
    <property type="evidence" value="ECO:0007669"/>
    <property type="project" value="UniProtKB-UniRule"/>
</dbReference>
<dbReference type="CDD" id="cd00613">
    <property type="entry name" value="GDC-P"/>
    <property type="match status" value="1"/>
</dbReference>
<dbReference type="FunFam" id="3.40.640.10:FF:000034">
    <property type="entry name" value="Probable glycine dehydrogenase (decarboxylating) subunit 2"/>
    <property type="match status" value="1"/>
</dbReference>
<dbReference type="FunFam" id="3.90.1150.10:FF:000014">
    <property type="entry name" value="Probable glycine dehydrogenase (decarboxylating) subunit 2"/>
    <property type="match status" value="1"/>
</dbReference>
<dbReference type="Gene3D" id="6.20.440.10">
    <property type="match status" value="1"/>
</dbReference>
<dbReference type="Gene3D" id="3.90.1150.10">
    <property type="entry name" value="Aspartate Aminotransferase, domain 1"/>
    <property type="match status" value="1"/>
</dbReference>
<dbReference type="Gene3D" id="3.40.640.10">
    <property type="entry name" value="Type I PLP-dependent aspartate aminotransferase-like (Major domain)"/>
    <property type="match status" value="1"/>
</dbReference>
<dbReference type="HAMAP" id="MF_00713">
    <property type="entry name" value="GcvPB"/>
    <property type="match status" value="1"/>
</dbReference>
<dbReference type="InterPro" id="IPR000192">
    <property type="entry name" value="Aminotrans_V_dom"/>
</dbReference>
<dbReference type="InterPro" id="IPR023012">
    <property type="entry name" value="GcvPB"/>
</dbReference>
<dbReference type="InterPro" id="IPR049316">
    <property type="entry name" value="GDC-P_C"/>
</dbReference>
<dbReference type="InterPro" id="IPR020581">
    <property type="entry name" value="GDC_P"/>
</dbReference>
<dbReference type="InterPro" id="IPR015424">
    <property type="entry name" value="PyrdxlP-dep_Trfase"/>
</dbReference>
<dbReference type="InterPro" id="IPR015421">
    <property type="entry name" value="PyrdxlP-dep_Trfase_major"/>
</dbReference>
<dbReference type="InterPro" id="IPR015422">
    <property type="entry name" value="PyrdxlP-dep_Trfase_small"/>
</dbReference>
<dbReference type="NCBIfam" id="NF003346">
    <property type="entry name" value="PRK04366.1"/>
    <property type="match status" value="1"/>
</dbReference>
<dbReference type="PANTHER" id="PTHR11773:SF1">
    <property type="entry name" value="GLYCINE DEHYDROGENASE (DECARBOXYLATING), MITOCHONDRIAL"/>
    <property type="match status" value="1"/>
</dbReference>
<dbReference type="PANTHER" id="PTHR11773">
    <property type="entry name" value="GLYCINE DEHYDROGENASE, DECARBOXYLATING"/>
    <property type="match status" value="1"/>
</dbReference>
<dbReference type="Pfam" id="PF00266">
    <property type="entry name" value="Aminotran_5"/>
    <property type="match status" value="1"/>
</dbReference>
<dbReference type="Pfam" id="PF21478">
    <property type="entry name" value="GcvP2_C"/>
    <property type="match status" value="1"/>
</dbReference>
<dbReference type="SUPFAM" id="SSF53383">
    <property type="entry name" value="PLP-dependent transferases"/>
    <property type="match status" value="1"/>
</dbReference>
<accession>P64219</accession>
<accession>Q99TV9</accession>